<dbReference type="EC" id="2.7.7.7" evidence="1"/>
<dbReference type="EC" id="2.7.7.49" evidence="1"/>
<dbReference type="EC" id="3.1.26.4" evidence="1"/>
<dbReference type="EMBL" id="D16665">
    <property type="protein sequence ID" value="BAA04072.1"/>
    <property type="molecule type" value="Genomic_DNA"/>
</dbReference>
<dbReference type="Proteomes" id="UP000007926">
    <property type="component" value="Genome"/>
</dbReference>
<dbReference type="GO" id="GO:0003677">
    <property type="term" value="F:DNA binding"/>
    <property type="evidence" value="ECO:0007669"/>
    <property type="project" value="UniProtKB-UniRule"/>
</dbReference>
<dbReference type="GO" id="GO:0003887">
    <property type="term" value="F:DNA-directed DNA polymerase activity"/>
    <property type="evidence" value="ECO:0007669"/>
    <property type="project" value="UniProtKB-UniRule"/>
</dbReference>
<dbReference type="GO" id="GO:0046872">
    <property type="term" value="F:metal ion binding"/>
    <property type="evidence" value="ECO:0007669"/>
    <property type="project" value="UniProtKB-UniRule"/>
</dbReference>
<dbReference type="GO" id="GO:0003964">
    <property type="term" value="F:RNA-directed DNA polymerase activity"/>
    <property type="evidence" value="ECO:0007669"/>
    <property type="project" value="UniProtKB-UniRule"/>
</dbReference>
<dbReference type="GO" id="GO:0004523">
    <property type="term" value="F:RNA-DNA hybrid ribonuclease activity"/>
    <property type="evidence" value="ECO:0007669"/>
    <property type="project" value="UniProtKB-UniRule"/>
</dbReference>
<dbReference type="GO" id="GO:0006260">
    <property type="term" value="P:DNA replication"/>
    <property type="evidence" value="ECO:0007669"/>
    <property type="project" value="UniProtKB-UniRule"/>
</dbReference>
<dbReference type="GO" id="GO:0052170">
    <property type="term" value="P:symbiont-mediated suppression of host innate immune response"/>
    <property type="evidence" value="ECO:0007669"/>
    <property type="project" value="UniProtKB-UniRule"/>
</dbReference>
<dbReference type="FunFam" id="3.30.70.270:FF:000009">
    <property type="entry name" value="Protein P"/>
    <property type="match status" value="1"/>
</dbReference>
<dbReference type="Gene3D" id="3.30.70.270">
    <property type="match status" value="1"/>
</dbReference>
<dbReference type="HAMAP" id="MF_04073">
    <property type="entry name" value="HBV_DPOL"/>
    <property type="match status" value="1"/>
</dbReference>
<dbReference type="InterPro" id="IPR043502">
    <property type="entry name" value="DNA/RNA_pol_sf"/>
</dbReference>
<dbReference type="InterPro" id="IPR001462">
    <property type="entry name" value="DNApol_viral_C"/>
</dbReference>
<dbReference type="InterPro" id="IPR000201">
    <property type="entry name" value="DNApol_viral_N"/>
</dbReference>
<dbReference type="InterPro" id="IPR037531">
    <property type="entry name" value="HBV_DPOL"/>
</dbReference>
<dbReference type="InterPro" id="IPR043128">
    <property type="entry name" value="Rev_trsase/Diguanyl_cyclase"/>
</dbReference>
<dbReference type="InterPro" id="IPR000477">
    <property type="entry name" value="RT_dom"/>
</dbReference>
<dbReference type="InterPro" id="IPR051320">
    <property type="entry name" value="Viral_Replic_Matur_Polypro"/>
</dbReference>
<dbReference type="PANTHER" id="PTHR33064:SF29">
    <property type="entry name" value="PEPTIDASE A2 DOMAIN-CONTAINING PROTEIN-RELATED"/>
    <property type="match status" value="1"/>
</dbReference>
<dbReference type="PANTHER" id="PTHR33064">
    <property type="entry name" value="POL PROTEIN"/>
    <property type="match status" value="1"/>
</dbReference>
<dbReference type="Pfam" id="PF00336">
    <property type="entry name" value="DNA_pol_viral_C"/>
    <property type="match status" value="1"/>
</dbReference>
<dbReference type="Pfam" id="PF00242">
    <property type="entry name" value="DNA_pol_viral_N"/>
    <property type="match status" value="1"/>
</dbReference>
<dbReference type="Pfam" id="PF00078">
    <property type="entry name" value="RVT_1"/>
    <property type="match status" value="1"/>
</dbReference>
<dbReference type="SUPFAM" id="SSF56672">
    <property type="entry name" value="DNA/RNA polymerases"/>
    <property type="match status" value="1"/>
</dbReference>
<dbReference type="PROSITE" id="PS50878">
    <property type="entry name" value="RT_POL"/>
    <property type="match status" value="1"/>
</dbReference>
<feature type="chain" id="PRO_0000323264" description="Protein P">
    <location>
        <begin position="1"/>
        <end position="838"/>
    </location>
</feature>
<feature type="domain" description="Reverse transcriptase" evidence="1">
    <location>
        <begin position="352"/>
        <end position="595"/>
    </location>
</feature>
<feature type="region of interest" description="Terminal protein domain (TP)" evidence="1">
    <location>
        <begin position="1"/>
        <end position="177"/>
    </location>
</feature>
<feature type="region of interest" description="Spacer" evidence="1">
    <location>
        <begin position="178"/>
        <end position="341"/>
    </location>
</feature>
<feature type="region of interest" description="Disordered" evidence="2">
    <location>
        <begin position="215"/>
        <end position="238"/>
    </location>
</feature>
<feature type="region of interest" description="Disordered" evidence="2">
    <location>
        <begin position="285"/>
        <end position="311"/>
    </location>
</feature>
<feature type="region of interest" description="Polymerase/reverse transcriptase domain (RT)" evidence="1">
    <location>
        <begin position="342"/>
        <end position="685"/>
    </location>
</feature>
<feature type="compositionally biased region" description="Polar residues" evidence="2">
    <location>
        <begin position="285"/>
        <end position="294"/>
    </location>
</feature>
<feature type="binding site" evidence="1">
    <location>
        <position position="424"/>
    </location>
    <ligand>
        <name>Mg(2+)</name>
        <dbReference type="ChEBI" id="CHEBI:18420"/>
        <note>catalytic</note>
    </ligand>
</feature>
<feature type="binding site" evidence="1">
    <location>
        <position position="546"/>
    </location>
    <ligand>
        <name>Mg(2+)</name>
        <dbReference type="ChEBI" id="CHEBI:18420"/>
        <note>catalytic</note>
    </ligand>
</feature>
<feature type="binding site" evidence="1">
    <location>
        <position position="547"/>
    </location>
    <ligand>
        <name>Mg(2+)</name>
        <dbReference type="ChEBI" id="CHEBI:18420"/>
        <note>catalytic</note>
    </ligand>
</feature>
<feature type="site" description="Priming of reverse-transcription by covalently linking the first nucleotide of the (-)DNA" evidence="1">
    <location>
        <position position="63"/>
    </location>
</feature>
<accession>Q81165</accession>
<organismHost>
    <name type="scientific">Homo sapiens</name>
    <name type="common">Human</name>
    <dbReference type="NCBI Taxonomy" id="9606"/>
</organismHost>
<organismHost>
    <name type="scientific">Pan troglodytes</name>
    <name type="common">Chimpanzee</name>
    <dbReference type="NCBI Taxonomy" id="9598"/>
</organismHost>
<organism>
    <name type="scientific">Hepatitis B virus genotype C subtype adr (isolate Japan/A4/1994)</name>
    <name type="common">HBV-C</name>
    <dbReference type="NCBI Taxonomy" id="489470"/>
    <lineage>
        <taxon>Viruses</taxon>
        <taxon>Riboviria</taxon>
        <taxon>Pararnavirae</taxon>
        <taxon>Artverviricota</taxon>
        <taxon>Revtraviricetes</taxon>
        <taxon>Blubervirales</taxon>
        <taxon>Hepadnaviridae</taxon>
        <taxon>Orthohepadnavirus</taxon>
        <taxon>Hepatitis B virus</taxon>
        <taxon>hepatitis B virus genotype C</taxon>
    </lineage>
</organism>
<reference key="1">
    <citation type="journal article" date="1992" name="Nucleic Acids Res.">
        <title>The complete nucleotide sequence of hepatitis B virus, subtype adr (SRADR) and phylogenetic analysis.</title>
        <authorList>
            <person name="Mukaide M."/>
        </authorList>
    </citation>
    <scope>NUCLEOTIDE SEQUENCE [GENOMIC DNA]</scope>
</reference>
<reference key="2">
    <citation type="journal article" date="2007" name="World J. Gastroenterol.">
        <title>Hepatitis B virus replication.</title>
        <authorList>
            <person name="Beck J."/>
            <person name="Nassal M."/>
        </authorList>
    </citation>
    <scope>REVIEW</scope>
</reference>
<protein>
    <recommendedName>
        <fullName evidence="1">Protein P</fullName>
    </recommendedName>
    <domain>
        <recommendedName>
            <fullName evidence="1">DNA-directed DNA polymerase</fullName>
            <ecNumber evidence="1">2.7.7.7</ecNumber>
        </recommendedName>
    </domain>
    <domain>
        <recommendedName>
            <fullName evidence="1">RNA-directed DNA polymerase</fullName>
            <ecNumber evidence="1">2.7.7.49</ecNumber>
        </recommendedName>
    </domain>
    <domain>
        <recommendedName>
            <fullName evidence="1">Ribonuclease H</fullName>
            <ecNumber evidence="1">3.1.26.4</ecNumber>
        </recommendedName>
    </domain>
</protein>
<gene>
    <name evidence="1" type="primary">P</name>
</gene>
<keyword id="KW-0235">DNA replication</keyword>
<keyword id="KW-0238">DNA-binding</keyword>
<keyword id="KW-0239">DNA-directed DNA polymerase</keyword>
<keyword id="KW-0255">Endonuclease</keyword>
<keyword id="KW-0945">Host-virus interaction</keyword>
<keyword id="KW-0378">Hydrolase</keyword>
<keyword id="KW-1090">Inhibition of host innate immune response by virus</keyword>
<keyword id="KW-1113">Inhibition of host RLR pathway by virus</keyword>
<keyword id="KW-0460">Magnesium</keyword>
<keyword id="KW-0479">Metal-binding</keyword>
<keyword id="KW-0511">Multifunctional enzyme</keyword>
<keyword id="KW-0540">Nuclease</keyword>
<keyword id="KW-0548">Nucleotidyltransferase</keyword>
<keyword id="KW-0695">RNA-directed DNA polymerase</keyword>
<keyword id="KW-0808">Transferase</keyword>
<keyword id="KW-0899">Viral immunoevasion</keyword>
<evidence type="ECO:0000255" key="1">
    <source>
        <dbReference type="HAMAP-Rule" id="MF_04073"/>
    </source>
</evidence>
<evidence type="ECO:0000256" key="2">
    <source>
        <dbReference type="SAM" id="MobiDB-lite"/>
    </source>
</evidence>
<comment type="function">
    <text evidence="1">Multifunctional enzyme that converts the viral RNA genome into dsDNA in viral cytoplasmic capsids. This enzyme displays a DNA polymerase activity that can copy either DNA or RNA templates, and a ribonuclease H (RNase H) activity that cleaves the RNA strand of RNA-DNA heteroduplexes in a partially processive 3'- to 5'-endonucleasic mode. Neo-synthesized pregenomic RNA (pgRNA) are encapsidated together with the P protein, and reverse-transcribed inside the nucleocapsid. Initiation of reverse-transcription occurs first by binding the epsilon loop on the pgRNA genome, and is initiated by protein priming, thereby the 5'-end of (-)DNA is covalently linked to P protein. Partial (+)DNA is synthesized from the (-)DNA template and generates the relaxed circular DNA (RC-DNA) genome. After budding and infection, the RC-DNA migrates in the nucleus, and is converted into a plasmid-like covalently closed circular DNA (cccDNA). The activity of P protein does not seem to be necessary for cccDNA generation, and is presumably released from (+)DNA by host nuclear DNA repair machinery.</text>
</comment>
<comment type="catalytic activity">
    <reaction evidence="1">
        <text>DNA(n) + a 2'-deoxyribonucleoside 5'-triphosphate = DNA(n+1) + diphosphate</text>
        <dbReference type="Rhea" id="RHEA:22508"/>
        <dbReference type="Rhea" id="RHEA-COMP:17339"/>
        <dbReference type="Rhea" id="RHEA-COMP:17340"/>
        <dbReference type="ChEBI" id="CHEBI:33019"/>
        <dbReference type="ChEBI" id="CHEBI:61560"/>
        <dbReference type="ChEBI" id="CHEBI:173112"/>
        <dbReference type="EC" id="2.7.7.7"/>
    </reaction>
</comment>
<comment type="catalytic activity">
    <reaction evidence="1">
        <text>DNA(n) + a 2'-deoxyribonucleoside 5'-triphosphate = DNA(n+1) + diphosphate</text>
        <dbReference type="Rhea" id="RHEA:22508"/>
        <dbReference type="Rhea" id="RHEA-COMP:17339"/>
        <dbReference type="Rhea" id="RHEA-COMP:17340"/>
        <dbReference type="ChEBI" id="CHEBI:33019"/>
        <dbReference type="ChEBI" id="CHEBI:61560"/>
        <dbReference type="ChEBI" id="CHEBI:173112"/>
        <dbReference type="EC" id="2.7.7.49"/>
    </reaction>
</comment>
<comment type="catalytic activity">
    <reaction evidence="1">
        <text>Endonucleolytic cleavage to 5'-phosphomonoester.</text>
        <dbReference type="EC" id="3.1.26.4"/>
    </reaction>
</comment>
<comment type="activity regulation">
    <text evidence="1">Activated by host HSP70 and HSP40 in vitro to be able to bind the epsilon loop of the pgRNA. Because deletion of the RNase H region renders the protein partly chaperone-independent, the chaperones may be needed indirectly to relieve occlusion of the RNA-binding site by this domain. Inhibited by several reverse-transcriptase inhibitors: Lamivudine, Adefovir and Entecavir.</text>
</comment>
<comment type="domain">
    <text evidence="1">Terminal protein domain (TP) is hepadnavirus-specific. Spacer domain is highly variable and separates the TP and RT domains. Polymerase/reverse-transcriptase domain (RT) and ribonuclease H domain (RH) are similar to retrovirus reverse transcriptase/RNase H.</text>
</comment>
<comment type="domain">
    <text evidence="1">The polymerase/reverse transcriptase (RT) and ribonuclease H (RH) domains are structured in five subdomains: finger, palm, thumb, connection and RNase H. Within the palm subdomain, the 'primer grip' region is thought to be involved in the positioning of the primer terminus for accommodating the incoming nucleotide. The RH domain stabilizes the association of RT with primer-template.</text>
</comment>
<comment type="miscellaneous">
    <text evidence="1">Hepadnaviral virions contain probably just one P protein molecule per particle.</text>
</comment>
<comment type="similarity">
    <text evidence="1">Belongs to the hepadnaviridae P protein family.</text>
</comment>
<sequence>MPLSYQHFRKLLLLDDEAGPLEEELPRLADEGLNHRVAEDLNLGNPNVSIPWTHKVGNFTGLYSSTVPVFNPEWQPPSFPHIHLQEDIINRCQQYVGPLTVNEKRRLKLIMPARFYPNLTKYLPLDKGIKPYYPEHAVNHYFKTRHYLHTLWKAGILYKRETTRSASFCGSPYSWEQELQHQTSTRHGDESFCSQSSGILSRSPVGPCVRSQLKQSRLGLQPQQGSMARGKSGRSGSIRARVHPTTRRSFGVEPSGSGHIDNSASSASSCLHQSAVRKTAYSHLSTSKRQSSSGHAVEFHNIPPSSARSQSEGPIFSCWWLQFRNSKPCSDYCLTHIVNLLEDWGPCTEHGEHNIRIPRTPARVTGGVFLVDKNPHNTTESRLVVDFSQFSRGSTHVSWPKFAVPNLQSLTNLLSSNLSWLSLDVSAAFYHIPLHPAAMPHLLVGSSGLPRYVARLSSTSRNINYQHGTMQDLHDSCSRNLYVSLLLLYKTFGRKLHLYSHPIILGFRKIPMGVGLSPFLLAQFTSAICSVVRRAFPHCLAFSYMDDVVLGAKSVQHLESLFTSITNFLLSLGIHLNPNKTKRWGYSLNFMGYVIGSWGTLPQEHIVLKLKQCFRKLPVNRPIDWKVCQRIVGLLGFAAPFTQCGYPALMPLYACIQSKQAFTFSPTYKAFLCQQYLHLYPVARQRSGLCQVFADATPTGWGLAIGHRRMRGTFVAPLPIHTAELLAACFARSRSGAKLIGTDNSVVLSRKYTSFPWLLGCAANWILRGTSFVYVPSALNPADDPSRGRLGLYRPLLHLPFRPTTGRTSLYAVSPSVPSHLPSRVHFASPLHVAWRPP</sequence>
<name>DPOL_HBVC8</name>
<proteinExistence type="inferred from homology"/>